<name>TUS_YERPE</name>
<organism>
    <name type="scientific">Yersinia pestis</name>
    <dbReference type="NCBI Taxonomy" id="632"/>
    <lineage>
        <taxon>Bacteria</taxon>
        <taxon>Pseudomonadati</taxon>
        <taxon>Pseudomonadota</taxon>
        <taxon>Gammaproteobacteria</taxon>
        <taxon>Enterobacterales</taxon>
        <taxon>Yersiniaceae</taxon>
        <taxon>Yersinia</taxon>
    </lineage>
</organism>
<evidence type="ECO:0000255" key="1">
    <source>
        <dbReference type="HAMAP-Rule" id="MF_00483"/>
    </source>
</evidence>
<evidence type="ECO:0000305" key="2"/>
<accession>Q9L6X9</accession>
<accession>Q0WEQ6</accession>
<keyword id="KW-0963">Cytoplasm</keyword>
<keyword id="KW-0235">DNA replication</keyword>
<keyword id="KW-0238">DNA-binding</keyword>
<keyword id="KW-1185">Reference proteome</keyword>
<comment type="function">
    <text evidence="1">Trans-acting protein required for termination of DNA replication. Binds to DNA replication terminator sequences (terA to terF) to prevent the passage of replication forks. The termination efficiency will be affected by the affinity of this protein for the terminator sequence.</text>
</comment>
<comment type="subcellular location">
    <subcellularLocation>
        <location evidence="1">Cytoplasm</location>
    </subcellularLocation>
</comment>
<comment type="similarity">
    <text evidence="1">Belongs to the Tus family.</text>
</comment>
<comment type="sequence caution" evidence="2">
    <conflict type="erroneous initiation">
        <sequence resource="EMBL-CDS" id="AAM85670"/>
    </conflict>
</comment>
<comment type="sequence caution" evidence="2">
    <conflict type="erroneous initiation">
        <sequence resource="EMBL-CDS" id="AAS62275"/>
    </conflict>
</comment>
<gene>
    <name evidence="1" type="primary">tus</name>
    <name type="ordered locus">YPO2265</name>
    <name type="ordered locus">y2107</name>
    <name type="ordered locus">YP_2062</name>
</gene>
<protein>
    <recommendedName>
        <fullName evidence="1">DNA replication terminus site-binding protein</fullName>
        <shortName evidence="1">Ter-binding protein</shortName>
    </recommendedName>
</protein>
<sequence length="311" mass="36180">MNKYDLIERMNTRFAELEVTLHQLHQQLDDLPLIAARVFSLPEIEKGTEHQPIEQITVNITEGEHAKKLGLQHFQRLFLHHQGQHVSSKAALRLPGVLCFSVTDKELIECQDIIKKTNQLKAELEHIITVESGLPSEQRFEFVHTHLHGLITLNTYRTITPLINPSSVRFGWANKHIIKNVTREDILLQLEKSLNAGRAVPPFTREQWRELISLEINDVQRLPEKTRLKIKRPVKVQPIARVWYQEQQKQVQHPCPMPLIAFCQHQLGAELPKLGELTDYDVKHIKHKYKPDAKPLRLLVPRLHLYVELEP</sequence>
<feature type="chain" id="PRO_0000049424" description="DNA replication terminus site-binding protein">
    <location>
        <begin position="1"/>
        <end position="311"/>
    </location>
</feature>
<proteinExistence type="inferred from homology"/>
<dbReference type="EMBL" id="AF231032">
    <property type="protein sequence ID" value="AAF68950.1"/>
    <property type="molecule type" value="Genomic_DNA"/>
</dbReference>
<dbReference type="EMBL" id="AL590842">
    <property type="protein sequence ID" value="CAL20892.1"/>
    <property type="molecule type" value="Genomic_DNA"/>
</dbReference>
<dbReference type="EMBL" id="AE009952">
    <property type="protein sequence ID" value="AAM85670.1"/>
    <property type="status" value="ALT_INIT"/>
    <property type="molecule type" value="Genomic_DNA"/>
</dbReference>
<dbReference type="EMBL" id="AE017042">
    <property type="protein sequence ID" value="AAS62275.1"/>
    <property type="status" value="ALT_INIT"/>
    <property type="molecule type" value="Genomic_DNA"/>
</dbReference>
<dbReference type="PIR" id="AI0275">
    <property type="entry name" value="AI0275"/>
</dbReference>
<dbReference type="RefSeq" id="WP_002227921.1">
    <property type="nucleotide sequence ID" value="NZ_WUCM01000001.1"/>
</dbReference>
<dbReference type="RefSeq" id="YP_002347232.1">
    <property type="nucleotide sequence ID" value="NC_003143.1"/>
</dbReference>
<dbReference type="SMR" id="Q9L6X9"/>
<dbReference type="STRING" id="214092.YPO2265"/>
<dbReference type="PaxDb" id="214092-YPO2265"/>
<dbReference type="DNASU" id="1147054"/>
<dbReference type="EnsemblBacteria" id="AAS62275">
    <property type="protein sequence ID" value="AAS62275"/>
    <property type="gene ID" value="YP_2062"/>
</dbReference>
<dbReference type="GeneID" id="57976405"/>
<dbReference type="KEGG" id="ype:YPO2265"/>
<dbReference type="KEGG" id="ypj:CH55_355"/>
<dbReference type="KEGG" id="ypk:y2107"/>
<dbReference type="KEGG" id="ypl:CH46_2849"/>
<dbReference type="KEGG" id="ypm:YP_2062"/>
<dbReference type="KEGG" id="ypv:BZ15_1276"/>
<dbReference type="KEGG" id="ypw:CH59_3852"/>
<dbReference type="PATRIC" id="fig|214092.21.peg.2661"/>
<dbReference type="eggNOG" id="ENOG502Z895">
    <property type="taxonomic scope" value="Bacteria"/>
</dbReference>
<dbReference type="HOGENOM" id="CLU_078181_0_0_6"/>
<dbReference type="Proteomes" id="UP000000815">
    <property type="component" value="Chromosome"/>
</dbReference>
<dbReference type="Proteomes" id="UP000001019">
    <property type="component" value="Chromosome"/>
</dbReference>
<dbReference type="Proteomes" id="UP000002490">
    <property type="component" value="Chromosome"/>
</dbReference>
<dbReference type="GO" id="GO:0005737">
    <property type="term" value="C:cytoplasm"/>
    <property type="evidence" value="ECO:0007669"/>
    <property type="project" value="UniProtKB-SubCell"/>
</dbReference>
<dbReference type="GO" id="GO:0003677">
    <property type="term" value="F:DNA binding"/>
    <property type="evidence" value="ECO:0007669"/>
    <property type="project" value="UniProtKB-UniRule"/>
</dbReference>
<dbReference type="GO" id="GO:0006274">
    <property type="term" value="P:DNA replication termination"/>
    <property type="evidence" value="ECO:0007669"/>
    <property type="project" value="UniProtKB-UniRule"/>
</dbReference>
<dbReference type="Gene3D" id="3.30.54.10">
    <property type="match status" value="1"/>
</dbReference>
<dbReference type="Gene3D" id="3.50.14.10">
    <property type="entry name" value="Replication terminator Tus, domain 1 superfamily/Replication terminator Tus"/>
    <property type="match status" value="1"/>
</dbReference>
<dbReference type="HAMAP" id="MF_00483">
    <property type="entry name" value="Rep_term_Tus"/>
    <property type="match status" value="1"/>
</dbReference>
<dbReference type="InterPro" id="IPR008865">
    <property type="entry name" value="DNA_replication_term_site-bd"/>
</dbReference>
<dbReference type="InterPro" id="IPR036381">
    <property type="entry name" value="Tus_dom1"/>
</dbReference>
<dbReference type="InterPro" id="IPR036384">
    <property type="entry name" value="Tus_sf"/>
</dbReference>
<dbReference type="NCBIfam" id="TIGR02648">
    <property type="entry name" value="rep_term_tus"/>
    <property type="match status" value="1"/>
</dbReference>
<dbReference type="Pfam" id="PF05472">
    <property type="entry name" value="Ter"/>
    <property type="match status" value="1"/>
</dbReference>
<dbReference type="SUPFAM" id="SSF56596">
    <property type="entry name" value="Replication terminator protein (Tus)"/>
    <property type="match status" value="1"/>
</dbReference>
<reference key="1">
    <citation type="journal article" date="2001" name="Mol. Genet. Genomics">
        <title>Site-directed mutagenesis and phylogenetic comparisons of the Escherichia coli Tus protein: DNA-protein interactions alone cannot account for Tus activity.</title>
        <authorList>
            <person name="Henderson T.A."/>
            <person name="Nilles A.F."/>
            <person name="Valjavec-Gratian M."/>
            <person name="Hill T.M."/>
        </authorList>
    </citation>
    <scope>NUCLEOTIDE SEQUENCE [GENOMIC DNA]</scope>
</reference>
<reference key="2">
    <citation type="journal article" date="2001" name="Nature">
        <title>Genome sequence of Yersinia pestis, the causative agent of plague.</title>
        <authorList>
            <person name="Parkhill J."/>
            <person name="Wren B.W."/>
            <person name="Thomson N.R."/>
            <person name="Titball R.W."/>
            <person name="Holden M.T.G."/>
            <person name="Prentice M.B."/>
            <person name="Sebaihia M."/>
            <person name="James K.D."/>
            <person name="Churcher C.M."/>
            <person name="Mungall K.L."/>
            <person name="Baker S."/>
            <person name="Basham D."/>
            <person name="Bentley S.D."/>
            <person name="Brooks K."/>
            <person name="Cerdeno-Tarraga A.-M."/>
            <person name="Chillingworth T."/>
            <person name="Cronin A."/>
            <person name="Davies R.M."/>
            <person name="Davis P."/>
            <person name="Dougan G."/>
            <person name="Feltwell T."/>
            <person name="Hamlin N."/>
            <person name="Holroyd S."/>
            <person name="Jagels K."/>
            <person name="Karlyshev A.V."/>
            <person name="Leather S."/>
            <person name="Moule S."/>
            <person name="Oyston P.C.F."/>
            <person name="Quail M.A."/>
            <person name="Rutherford K.M."/>
            <person name="Simmonds M."/>
            <person name="Skelton J."/>
            <person name="Stevens K."/>
            <person name="Whitehead S."/>
            <person name="Barrell B.G."/>
        </authorList>
    </citation>
    <scope>NUCLEOTIDE SEQUENCE [LARGE SCALE GENOMIC DNA]</scope>
    <source>
        <strain>CO-92 / Biovar Orientalis</strain>
    </source>
</reference>
<reference key="3">
    <citation type="journal article" date="2002" name="J. Bacteriol.">
        <title>Genome sequence of Yersinia pestis KIM.</title>
        <authorList>
            <person name="Deng W."/>
            <person name="Burland V."/>
            <person name="Plunkett G. III"/>
            <person name="Boutin A."/>
            <person name="Mayhew G.F."/>
            <person name="Liss P."/>
            <person name="Perna N.T."/>
            <person name="Rose D.J."/>
            <person name="Mau B."/>
            <person name="Zhou S."/>
            <person name="Schwartz D.C."/>
            <person name="Fetherston J.D."/>
            <person name="Lindler L.E."/>
            <person name="Brubaker R.R."/>
            <person name="Plano G.V."/>
            <person name="Straley S.C."/>
            <person name="McDonough K.A."/>
            <person name="Nilles M.L."/>
            <person name="Matson J.S."/>
            <person name="Blattner F.R."/>
            <person name="Perry R.D."/>
        </authorList>
    </citation>
    <scope>NUCLEOTIDE SEQUENCE [LARGE SCALE GENOMIC DNA]</scope>
    <source>
        <strain>KIM10+ / Biovar Mediaevalis</strain>
    </source>
</reference>
<reference key="4">
    <citation type="journal article" date="2004" name="DNA Res.">
        <title>Complete genome sequence of Yersinia pestis strain 91001, an isolate avirulent to humans.</title>
        <authorList>
            <person name="Song Y."/>
            <person name="Tong Z."/>
            <person name="Wang J."/>
            <person name="Wang L."/>
            <person name="Guo Z."/>
            <person name="Han Y."/>
            <person name="Zhang J."/>
            <person name="Pei D."/>
            <person name="Zhou D."/>
            <person name="Qin H."/>
            <person name="Pang X."/>
            <person name="Han Y."/>
            <person name="Zhai J."/>
            <person name="Li M."/>
            <person name="Cui B."/>
            <person name="Qi Z."/>
            <person name="Jin L."/>
            <person name="Dai R."/>
            <person name="Chen F."/>
            <person name="Li S."/>
            <person name="Ye C."/>
            <person name="Du Z."/>
            <person name="Lin W."/>
            <person name="Wang J."/>
            <person name="Yu J."/>
            <person name="Yang H."/>
            <person name="Wang J."/>
            <person name="Huang P."/>
            <person name="Yang R."/>
        </authorList>
    </citation>
    <scope>NUCLEOTIDE SEQUENCE [LARGE SCALE GENOMIC DNA]</scope>
    <source>
        <strain>91001 / Biovar Mediaevalis</strain>
    </source>
</reference>